<keyword id="KW-0520">NAD</keyword>
<keyword id="KW-0521">NADP</keyword>
<keyword id="KW-0560">Oxidoreductase</keyword>
<keyword id="KW-1185">Reference proteome</keyword>
<evidence type="ECO:0000250" key="1">
    <source>
        <dbReference type="UniProtKB" id="P47895"/>
    </source>
</evidence>
<evidence type="ECO:0000269" key="2">
    <source>
    </source>
</evidence>
<evidence type="ECO:0000269" key="3">
    <source>
    </source>
</evidence>
<evidence type="ECO:0000303" key="4">
    <source>
    </source>
</evidence>
<evidence type="ECO:0000305" key="5"/>
<evidence type="ECO:0000312" key="6">
    <source>
        <dbReference type="EMBL" id="CAB12041.1"/>
    </source>
</evidence>
<comment type="function">
    <text evidence="2">Catalyzes the NAD(P)(+)-dependent oxidation of alpha-ketoglutaric semialdehyde (alphaKGSA) to alpha-ketoglutarate. Prefers NADP(+) to NAD(+) as a cosubstrate. In vitro, can also use various aldehydes.</text>
</comment>
<comment type="catalytic activity">
    <reaction evidence="2">
        <text>2,5-dioxopentanoate + NADP(+) + H2O = 2-oxoglutarate + NADPH + 2 H(+)</text>
        <dbReference type="Rhea" id="RHEA:11296"/>
        <dbReference type="ChEBI" id="CHEBI:15377"/>
        <dbReference type="ChEBI" id="CHEBI:15378"/>
        <dbReference type="ChEBI" id="CHEBI:16810"/>
        <dbReference type="ChEBI" id="CHEBI:57783"/>
        <dbReference type="ChEBI" id="CHEBI:58136"/>
        <dbReference type="ChEBI" id="CHEBI:58349"/>
        <dbReference type="EC" id="1.2.1.26"/>
    </reaction>
</comment>
<comment type="catalytic activity">
    <reaction evidence="2">
        <text>2,5-dioxopentanoate + NAD(+) + H2O = 2-oxoglutarate + NADH + 2 H(+)</text>
        <dbReference type="Rhea" id="RHEA:47152"/>
        <dbReference type="ChEBI" id="CHEBI:15377"/>
        <dbReference type="ChEBI" id="CHEBI:15378"/>
        <dbReference type="ChEBI" id="CHEBI:16810"/>
        <dbReference type="ChEBI" id="CHEBI:57540"/>
        <dbReference type="ChEBI" id="CHEBI:57945"/>
        <dbReference type="ChEBI" id="CHEBI:58136"/>
    </reaction>
</comment>
<comment type="biophysicochemical properties">
    <kinetics>
        <KM evidence="2">10.4 uM for alpha-ketoglutaric semialdehyde (in the presence of NAD(+), at 25 degrees Celsius and pH 7.2)</KM>
        <KM evidence="2">2.8 uM for alpha-ketoglutaric semialdehyde (in the presence of NADP(+), at 25 degrees Celsius and pH 7.2)</KM>
        <KM evidence="2">1460 uM for propionaldehyde (in the presence of NADP(+))</KM>
        <KM evidence="2">170 uM for butylaldehyde (in the presence of NADP(+))</KM>
        <KM evidence="2">145 uM for valeraldehyde (in the presence of NADP(+))</KM>
        <KM evidence="2">81.4 uM for hexylaldehyde (in the presence of NADP(+))</KM>
        <KM evidence="2">39.3 uM for heptalaldehyde (in the presence of NADP(+))</KM>
        <KM evidence="2">35.2 uM for octylaldehyde (in the presence of NADP(+))</KM>
        <KM evidence="2">556.9 uM for NAD(+) (at 25 degrees Celsius and pH 7.2)</KM>
        <KM evidence="2">94 uM for NADP(+) (at 25 degrees Celsius and pH 7.2)</KM>
        <Vmax evidence="2">1.14 umol/min/mg enzyme for the oxidation of alpha-ketoglutaric semialdehyde with NAD(+) (at 25 degrees Celsius and pH 7.2)</Vmax>
        <Vmax evidence="2">1.05 umol/min/mg enzyme for the oxidation of alpha-ketoglutaric semialdehyde with NADP(+) (at 25 degrees Celsius and pH 7.2)</Vmax>
        <Vmax evidence="2">0.53 umol/min/mg enzyme for the oxidation of propionaldehyde with NADP(+) (at 25 degrees Celsius and pH 7.2)</Vmax>
        <Vmax evidence="2">1.02 umol/min/mg enzyme for the oxidation of butylaldehyde with NADP(+) (at 25 degrees Celsius and pH 7.2)</Vmax>
        <Vmax evidence="2">1.34 umol/min/mg enzyme for the oxidation of valeraldehyde with NADP(+) (at 25 degrees Celsius and pH 7.2)</Vmax>
        <Vmax evidence="2">1.08 umol/min/mg enzyme for the oxidation of hexylaldehyde with NADP(+) (at 25 degrees Celsius and pH 7.2)</Vmax>
        <Vmax evidence="2">0.9 umol/min/mg enzyme for the oxidation of heptalaldehyde with NADP(+) (at 25 degrees Celsius and pH 7.2)</Vmax>
        <Vmax evidence="2">0.87 umol/min/mg enzyme for the oxidation of octylaldehyde with NADP(+) (at 25 degrees Celsius and pH 7.2)</Vmax>
        <text evidence="2">kcat is 2.75 sec(-1) with alpha-ketoglutaric semialdehyde as substrate (in the presence of NAD(+)). kcat is 1.12 sec(-1) with alpha-ketoglutaric semialdehyde as substrate (in the presence of NADP(+)). kcat is 1.29 sec(-1) with propionaldehyde as substrate (in the presence of NADP(+)). kcat is 1.35 sec(-1) with butylaldehyde as substrate (in the presence of NADP(+)). kcat is 2.10 sec(-1) with valeraldehyde as substrate (in the presence of NADP(+)). kcat is 1.47 sec(-1) with hexylaldehyde as substrate (in the presence of NADP(+)). kcat is 0.87 sec(-1) with heptalaldehyde as substrate (in the presence of NADP(+)). kcat is 0.97 sec(-1) with octylaldehyde as substrate (in the presence of NADP(+)).</text>
    </kinetics>
</comment>
<comment type="subunit">
    <text evidence="2">Homotetramer.</text>
</comment>
<comment type="disruption phenotype">
    <text evidence="3">No effect on vanillin degradation.</text>
</comment>
<comment type="similarity">
    <text evidence="5">Belongs to the aldehyde dehydrogenase family.</text>
</comment>
<protein>
    <recommendedName>
        <fullName evidence="4">Alpha-ketoglutaric semialdehyde dehydrogenase</fullName>
        <shortName evidence="4">alphaKGSA dehydrogenase</shortName>
        <ecNumber evidence="2">1.2.1.26</ecNumber>
    </recommendedName>
    <alternativeName>
        <fullName evidence="5">2,5-dioxovalerate dehydrogenase</fullName>
    </alternativeName>
</protein>
<sequence length="488" mass="52415">MSVITEQNTYLNFINGEWVKSQSGDMVKVENPADVNDIVGYVQNSTAEDVERAVTAANEAKTAWRKLTGAERGQYLYKTADIMEQRLEEIAACATREMGKTLPEAKGETARGIAILRYYAGEGMRKTGDVIPSTDKDALMFTTRVPLGVVGVISPWNFPVAIPIWKMAPALVYGNTVVIKPATETAVTCAKIIACFEEAGLPAGVINLVTGPGSVVGQGLAEHDGVNAVTFTGSNQVGKIIGQAALARGAKYQLEMGGKNPVIVADDADLEAAAEAVITGAFRSTGQKCTATSRVIVQSGIYERFKEKLLQRTKDITIGDSLKEDVWMGPIASKNQLDNCLSYIEKGKQEGASLLIGGEKLENGKYQNGYYVQPAIFDNVTSEMTIAQEEIFGPVIALIKVDSIEEALNIANDVKFGLSASIFTENIGRMLSFIDEIDAGLVRINAESAGVELQAPFGGMKQSSSHSREQGEAAKDFFTAIKTVFVKP</sequence>
<reference key="1">
    <citation type="journal article" date="1995" name="Microbiology">
        <title>Determination of a 21548 bp nucleotide sequence around the 24 degrees region of the Bacillus subtilis chromosome.</title>
        <authorList>
            <person name="Ogawa K."/>
            <person name="Akagawa E."/>
            <person name="Nakamura K."/>
            <person name="Yamane K."/>
        </authorList>
    </citation>
    <scope>NUCLEOTIDE SEQUENCE [GENOMIC DNA]</scope>
    <source>
        <strain>168</strain>
    </source>
</reference>
<reference key="2">
    <citation type="journal article" date="1997" name="Nature">
        <title>The complete genome sequence of the Gram-positive bacterium Bacillus subtilis.</title>
        <authorList>
            <person name="Kunst F."/>
            <person name="Ogasawara N."/>
            <person name="Moszer I."/>
            <person name="Albertini A.M."/>
            <person name="Alloni G."/>
            <person name="Azevedo V."/>
            <person name="Bertero M.G."/>
            <person name="Bessieres P."/>
            <person name="Bolotin A."/>
            <person name="Borchert S."/>
            <person name="Borriss R."/>
            <person name="Boursier L."/>
            <person name="Brans A."/>
            <person name="Braun M."/>
            <person name="Brignell S.C."/>
            <person name="Bron S."/>
            <person name="Brouillet S."/>
            <person name="Bruschi C.V."/>
            <person name="Caldwell B."/>
            <person name="Capuano V."/>
            <person name="Carter N.M."/>
            <person name="Choi S.-K."/>
            <person name="Codani J.-J."/>
            <person name="Connerton I.F."/>
            <person name="Cummings N.J."/>
            <person name="Daniel R.A."/>
            <person name="Denizot F."/>
            <person name="Devine K.M."/>
            <person name="Duesterhoeft A."/>
            <person name="Ehrlich S.D."/>
            <person name="Emmerson P.T."/>
            <person name="Entian K.-D."/>
            <person name="Errington J."/>
            <person name="Fabret C."/>
            <person name="Ferrari E."/>
            <person name="Foulger D."/>
            <person name="Fritz C."/>
            <person name="Fujita M."/>
            <person name="Fujita Y."/>
            <person name="Fuma S."/>
            <person name="Galizzi A."/>
            <person name="Galleron N."/>
            <person name="Ghim S.-Y."/>
            <person name="Glaser P."/>
            <person name="Goffeau A."/>
            <person name="Golightly E.J."/>
            <person name="Grandi G."/>
            <person name="Guiseppi G."/>
            <person name="Guy B.J."/>
            <person name="Haga K."/>
            <person name="Haiech J."/>
            <person name="Harwood C.R."/>
            <person name="Henaut A."/>
            <person name="Hilbert H."/>
            <person name="Holsappel S."/>
            <person name="Hosono S."/>
            <person name="Hullo M.-F."/>
            <person name="Itaya M."/>
            <person name="Jones L.-M."/>
            <person name="Joris B."/>
            <person name="Karamata D."/>
            <person name="Kasahara Y."/>
            <person name="Klaerr-Blanchard M."/>
            <person name="Klein C."/>
            <person name="Kobayashi Y."/>
            <person name="Koetter P."/>
            <person name="Koningstein G."/>
            <person name="Krogh S."/>
            <person name="Kumano M."/>
            <person name="Kurita K."/>
            <person name="Lapidus A."/>
            <person name="Lardinois S."/>
            <person name="Lauber J."/>
            <person name="Lazarevic V."/>
            <person name="Lee S.-M."/>
            <person name="Levine A."/>
            <person name="Liu H."/>
            <person name="Masuda S."/>
            <person name="Mauel C."/>
            <person name="Medigue C."/>
            <person name="Medina N."/>
            <person name="Mellado R.P."/>
            <person name="Mizuno M."/>
            <person name="Moestl D."/>
            <person name="Nakai S."/>
            <person name="Noback M."/>
            <person name="Noone D."/>
            <person name="O'Reilly M."/>
            <person name="Ogawa K."/>
            <person name="Ogiwara A."/>
            <person name="Oudega B."/>
            <person name="Park S.-H."/>
            <person name="Parro V."/>
            <person name="Pohl T.M."/>
            <person name="Portetelle D."/>
            <person name="Porwollik S."/>
            <person name="Prescott A.M."/>
            <person name="Presecan E."/>
            <person name="Pujic P."/>
            <person name="Purnelle B."/>
            <person name="Rapoport G."/>
            <person name="Rey M."/>
            <person name="Reynolds S."/>
            <person name="Rieger M."/>
            <person name="Rivolta C."/>
            <person name="Rocha E."/>
            <person name="Roche B."/>
            <person name="Rose M."/>
            <person name="Sadaie Y."/>
            <person name="Sato T."/>
            <person name="Scanlan E."/>
            <person name="Schleich S."/>
            <person name="Schroeter R."/>
            <person name="Scoffone F."/>
            <person name="Sekiguchi J."/>
            <person name="Sekowska A."/>
            <person name="Seror S.J."/>
            <person name="Serror P."/>
            <person name="Shin B.-S."/>
            <person name="Soldo B."/>
            <person name="Sorokin A."/>
            <person name="Tacconi E."/>
            <person name="Takagi T."/>
            <person name="Takahashi H."/>
            <person name="Takemaru K."/>
            <person name="Takeuchi M."/>
            <person name="Tamakoshi A."/>
            <person name="Tanaka T."/>
            <person name="Terpstra P."/>
            <person name="Tognoni A."/>
            <person name="Tosato V."/>
            <person name="Uchiyama S."/>
            <person name="Vandenbol M."/>
            <person name="Vannier F."/>
            <person name="Vassarotti A."/>
            <person name="Viari A."/>
            <person name="Wambutt R."/>
            <person name="Wedler E."/>
            <person name="Wedler H."/>
            <person name="Weitzenegger T."/>
            <person name="Winters P."/>
            <person name="Wipat A."/>
            <person name="Yamamoto H."/>
            <person name="Yamane K."/>
            <person name="Yasumoto K."/>
            <person name="Yata K."/>
            <person name="Yoshida K."/>
            <person name="Yoshikawa H.-F."/>
            <person name="Zumstein E."/>
            <person name="Yoshikawa H."/>
            <person name="Danchin A."/>
        </authorList>
    </citation>
    <scope>NUCLEOTIDE SEQUENCE [LARGE SCALE GENOMIC DNA]</scope>
    <source>
        <strain>168</strain>
    </source>
</reference>
<reference key="3">
    <citation type="journal article" date="2007" name="J. Biol. Chem.">
        <title>alpha-ketoglutaric semialdehyde dehydrogenase isozymes involved in metabolic pathways of D-glucarate, D-galactarate, and hydroxy-L-proline. Molecular and metabolic convergent evolution.</title>
        <authorList>
            <person name="Watanabe S."/>
            <person name="Yamada M."/>
            <person name="Ohtsu I."/>
            <person name="Makino K."/>
        </authorList>
    </citation>
    <scope>FUNCTION</scope>
    <scope>CATALYTIC ACTIVITY</scope>
    <scope>SUBSTRATE SPECIFICITY</scope>
    <scope>BIOPHYSICOCHEMICAL PROPERTIES</scope>
    <scope>SUBUNIT</scope>
</reference>
<reference key="4">
    <citation type="journal article" date="2016" name="Appl. Microbiol. Biotechnol.">
        <title>Identification and characterization of the vanillin dehydrogenase YfmT in Bacillus subtilis 3NA.</title>
        <authorList>
            <person name="Graf N."/>
            <person name="Wenzel M."/>
            <person name="Altenbuchner J."/>
        </authorList>
    </citation>
    <scope>DISRUPTION PHENOTYPE</scope>
    <source>
        <strain>168 / 3NA</strain>
    </source>
</reference>
<proteinExistence type="evidence at protein level"/>
<organism>
    <name type="scientific">Bacillus subtilis (strain 168)</name>
    <dbReference type="NCBI Taxonomy" id="224308"/>
    <lineage>
        <taxon>Bacteria</taxon>
        <taxon>Bacillati</taxon>
        <taxon>Bacillota</taxon>
        <taxon>Bacilli</taxon>
        <taxon>Bacillales</taxon>
        <taxon>Bacillaceae</taxon>
        <taxon>Bacillus</taxon>
    </lineage>
</organism>
<feature type="chain" id="PRO_0000056444" description="Alpha-ketoglutaric semialdehyde dehydrogenase">
    <location>
        <begin position="1"/>
        <end position="488"/>
    </location>
</feature>
<feature type="active site" description="Proton acceptor" evidence="1">
    <location>
        <position position="255"/>
    </location>
</feature>
<feature type="active site" description="Nucleophile" evidence="1">
    <location>
        <position position="289"/>
    </location>
</feature>
<feature type="binding site" evidence="1">
    <location>
        <position position="180"/>
    </location>
    <ligand>
        <name>NAD(+)</name>
        <dbReference type="ChEBI" id="CHEBI:57540"/>
    </ligand>
</feature>
<feature type="binding site" evidence="1">
    <location>
        <begin position="233"/>
        <end position="238"/>
    </location>
    <ligand>
        <name>NAD(+)</name>
        <dbReference type="ChEBI" id="CHEBI:57540"/>
    </ligand>
</feature>
<feature type="binding site" evidence="1">
    <location>
        <position position="336"/>
    </location>
    <ligand>
        <name>NAD(+)</name>
        <dbReference type="ChEBI" id="CHEBI:57540"/>
    </ligand>
</feature>
<feature type="binding site" evidence="1">
    <location>
        <position position="390"/>
    </location>
    <ligand>
        <name>NAD(+)</name>
        <dbReference type="ChEBI" id="CHEBI:57540"/>
    </ligand>
</feature>
<gene>
    <name evidence="6" type="primary">gucD</name>
    <name type="synonym">ycbD</name>
    <name type="ordered locus">BSU02470</name>
</gene>
<accession>P42236</accession>
<name>KGSDH_BACSU</name>
<dbReference type="EC" id="1.2.1.26" evidence="2"/>
<dbReference type="EMBL" id="D30808">
    <property type="protein sequence ID" value="BAA06468.1"/>
    <property type="molecule type" value="Genomic_DNA"/>
</dbReference>
<dbReference type="EMBL" id="AL009126">
    <property type="protein sequence ID" value="CAB12041.1"/>
    <property type="molecule type" value="Genomic_DNA"/>
</dbReference>
<dbReference type="PIR" id="G69752">
    <property type="entry name" value="G69752"/>
</dbReference>
<dbReference type="RefSeq" id="NP_388129.1">
    <property type="nucleotide sequence ID" value="NC_000964.3"/>
</dbReference>
<dbReference type="RefSeq" id="WP_003246263.1">
    <property type="nucleotide sequence ID" value="NZ_OZ025638.1"/>
</dbReference>
<dbReference type="SMR" id="P42236"/>
<dbReference type="FunCoup" id="P42236">
    <property type="interactions" value="153"/>
</dbReference>
<dbReference type="STRING" id="224308.BSU02470"/>
<dbReference type="PaxDb" id="224308-BSU02470"/>
<dbReference type="EnsemblBacteria" id="CAB12041">
    <property type="protein sequence ID" value="CAB12041"/>
    <property type="gene ID" value="BSU_02470"/>
</dbReference>
<dbReference type="GeneID" id="938406"/>
<dbReference type="KEGG" id="bsu:BSU02470"/>
<dbReference type="PATRIC" id="fig|224308.179.peg.254"/>
<dbReference type="eggNOG" id="COG1012">
    <property type="taxonomic scope" value="Bacteria"/>
</dbReference>
<dbReference type="InParanoid" id="P42236"/>
<dbReference type="OrthoDB" id="9762913at2"/>
<dbReference type="PhylomeDB" id="P42236"/>
<dbReference type="BioCyc" id="BSUB:BSU02470-MONOMER"/>
<dbReference type="SABIO-RK" id="P42236"/>
<dbReference type="Proteomes" id="UP000001570">
    <property type="component" value="Chromosome"/>
</dbReference>
<dbReference type="GO" id="GO:0047533">
    <property type="term" value="F:2,5-dioxovalerate dehydrogenase (NADP+) activity"/>
    <property type="evidence" value="ECO:0007669"/>
    <property type="project" value="UniProtKB-EC"/>
</dbReference>
<dbReference type="CDD" id="cd07097">
    <property type="entry name" value="ALDH_KGSADH-YcbD"/>
    <property type="match status" value="1"/>
</dbReference>
<dbReference type="FunFam" id="3.40.309.10:FF:000012">
    <property type="entry name" value="Betaine aldehyde dehydrogenase"/>
    <property type="match status" value="1"/>
</dbReference>
<dbReference type="FunFam" id="3.40.605.10:FF:000007">
    <property type="entry name" value="NAD/NADP-dependent betaine aldehyde dehydrogenase"/>
    <property type="match status" value="1"/>
</dbReference>
<dbReference type="Gene3D" id="3.40.605.10">
    <property type="entry name" value="Aldehyde Dehydrogenase, Chain A, domain 1"/>
    <property type="match status" value="1"/>
</dbReference>
<dbReference type="Gene3D" id="3.40.309.10">
    <property type="entry name" value="Aldehyde Dehydrogenase, Chain A, domain 2"/>
    <property type="match status" value="1"/>
</dbReference>
<dbReference type="InterPro" id="IPR016161">
    <property type="entry name" value="Ald_DH/histidinol_DH"/>
</dbReference>
<dbReference type="InterPro" id="IPR016163">
    <property type="entry name" value="Ald_DH_C"/>
</dbReference>
<dbReference type="InterPro" id="IPR016160">
    <property type="entry name" value="Ald_DH_CS_CYS"/>
</dbReference>
<dbReference type="InterPro" id="IPR029510">
    <property type="entry name" value="Ald_DH_CS_GLU"/>
</dbReference>
<dbReference type="InterPro" id="IPR016162">
    <property type="entry name" value="Ald_DH_N"/>
</dbReference>
<dbReference type="InterPro" id="IPR015590">
    <property type="entry name" value="Aldehyde_DH_dom"/>
</dbReference>
<dbReference type="InterPro" id="IPR054869">
    <property type="entry name" value="AlphKGSA_gudD"/>
</dbReference>
<dbReference type="NCBIfam" id="NF042993">
    <property type="entry name" value="AlphKGSA_gudD"/>
    <property type="match status" value="1"/>
</dbReference>
<dbReference type="PANTHER" id="PTHR11699">
    <property type="entry name" value="ALDEHYDE DEHYDROGENASE-RELATED"/>
    <property type="match status" value="1"/>
</dbReference>
<dbReference type="Pfam" id="PF00171">
    <property type="entry name" value="Aldedh"/>
    <property type="match status" value="1"/>
</dbReference>
<dbReference type="SUPFAM" id="SSF53720">
    <property type="entry name" value="ALDH-like"/>
    <property type="match status" value="1"/>
</dbReference>
<dbReference type="PROSITE" id="PS00070">
    <property type="entry name" value="ALDEHYDE_DEHYDR_CYS"/>
    <property type="match status" value="1"/>
</dbReference>
<dbReference type="PROSITE" id="PS00687">
    <property type="entry name" value="ALDEHYDE_DEHYDR_GLU"/>
    <property type="match status" value="1"/>
</dbReference>